<sequence>MANILRKWIESDRRELRRINRLANRVDSYQDQMAKLTDDELKAKTPEFRQRIQDGEDLDHLLPEAFAVAREGAKRVLGLFPFHVQVMGGIVLHEGNIAEMKTGEGKTLTATMPVYLNALSGKGVHVITVNEYLSERDAEEMGQLYRWLGCSVGVNGAQKSPDEKRAAYACDIMYSTNSEIGFDYLRDNMAVYKEDQVQRGLNFAIVDEVDSILIDEARTPLIISGPGTGTSKLYQQADRFVKTLKNEDDYKIDLESKTVSLTDEGIKKAEKYFNLKNLYDPENTALTHHLDQSLRANYIMLLDKDYVVNDGEVLIVDSFTGRVMEGRRFSDGLHQAIEAKEGVEIQEENKTMANITYQNLFRMYSKLAGMTGTARTEMEEFREIYNMETITIPTNRPVARVDEPDLLYPTLESKFRAVVKRIQALHEKGQPVLVGTVAVETSEYLSHLLDQQKIPHVVLNAKNHAREAEIIKNAGQVGAVTIATNMAGRGTDIKLGPGVKELGGLAVIGTERHESRRIDNQLRGRSGRQGDPGLSQFYLSLEDELMKRFGGDRIKNFLQRLQTDDDDEDVVIKSRFLTHQVESAQKRVEGNNYDSRKNVLQYDDVMREQREIIYRERQQVITEIDSLKWVLMPMVKRTIQRAIDAHTLGDKKDWKLQEIVDFAVEVLVKPDQITVGMLEGKSKDEMVDLMMDFAEQVYEEKKHQLYDDSQMLEFEKVVILRVVDAHWTDHIDAMDQFRQSVGLRGYGQQNPLVEYQTTGYRMFEQMVADIEYETTRLFMKSEIRQNVTR</sequence>
<accession>B2GAI7</accession>
<dbReference type="EC" id="7.4.2.8" evidence="1"/>
<dbReference type="EMBL" id="AP008937">
    <property type="protein sequence ID" value="BAG26669.1"/>
    <property type="molecule type" value="Genomic_DNA"/>
</dbReference>
<dbReference type="RefSeq" id="WP_012390854.1">
    <property type="nucleotide sequence ID" value="NC_010610.1"/>
</dbReference>
<dbReference type="SMR" id="B2GAI7"/>
<dbReference type="KEGG" id="lfe:LAF_0333"/>
<dbReference type="PATRIC" id="fig|334390.5.peg.364"/>
<dbReference type="eggNOG" id="COG0653">
    <property type="taxonomic scope" value="Bacteria"/>
</dbReference>
<dbReference type="HOGENOM" id="CLU_005314_3_2_9"/>
<dbReference type="Proteomes" id="UP000001697">
    <property type="component" value="Chromosome"/>
</dbReference>
<dbReference type="GO" id="GO:0031522">
    <property type="term" value="C:cell envelope Sec protein transport complex"/>
    <property type="evidence" value="ECO:0007669"/>
    <property type="project" value="TreeGrafter"/>
</dbReference>
<dbReference type="GO" id="GO:0005829">
    <property type="term" value="C:cytosol"/>
    <property type="evidence" value="ECO:0007669"/>
    <property type="project" value="TreeGrafter"/>
</dbReference>
<dbReference type="GO" id="GO:0005886">
    <property type="term" value="C:plasma membrane"/>
    <property type="evidence" value="ECO:0007669"/>
    <property type="project" value="UniProtKB-SubCell"/>
</dbReference>
<dbReference type="GO" id="GO:0005524">
    <property type="term" value="F:ATP binding"/>
    <property type="evidence" value="ECO:0007669"/>
    <property type="project" value="UniProtKB-UniRule"/>
</dbReference>
<dbReference type="GO" id="GO:0008564">
    <property type="term" value="F:protein-exporting ATPase activity"/>
    <property type="evidence" value="ECO:0007669"/>
    <property type="project" value="UniProtKB-EC"/>
</dbReference>
<dbReference type="GO" id="GO:0065002">
    <property type="term" value="P:intracellular protein transmembrane transport"/>
    <property type="evidence" value="ECO:0007669"/>
    <property type="project" value="UniProtKB-UniRule"/>
</dbReference>
<dbReference type="GO" id="GO:0017038">
    <property type="term" value="P:protein import"/>
    <property type="evidence" value="ECO:0007669"/>
    <property type="project" value="InterPro"/>
</dbReference>
<dbReference type="GO" id="GO:0006605">
    <property type="term" value="P:protein targeting"/>
    <property type="evidence" value="ECO:0007669"/>
    <property type="project" value="UniProtKB-UniRule"/>
</dbReference>
<dbReference type="GO" id="GO:0043952">
    <property type="term" value="P:protein transport by the Sec complex"/>
    <property type="evidence" value="ECO:0007669"/>
    <property type="project" value="TreeGrafter"/>
</dbReference>
<dbReference type="CDD" id="cd17928">
    <property type="entry name" value="DEXDc_SecA"/>
    <property type="match status" value="1"/>
</dbReference>
<dbReference type="CDD" id="cd18803">
    <property type="entry name" value="SF2_C_secA"/>
    <property type="match status" value="1"/>
</dbReference>
<dbReference type="FunFam" id="3.40.50.300:FF:000429">
    <property type="entry name" value="Preprotein translocase subunit SecA"/>
    <property type="match status" value="1"/>
</dbReference>
<dbReference type="FunFam" id="3.90.1440.10:FF:000001">
    <property type="entry name" value="Preprotein translocase subunit SecA"/>
    <property type="match status" value="1"/>
</dbReference>
<dbReference type="Gene3D" id="1.10.3060.10">
    <property type="entry name" value="Helical scaffold and wing domains of SecA"/>
    <property type="match status" value="1"/>
</dbReference>
<dbReference type="Gene3D" id="3.40.50.300">
    <property type="entry name" value="P-loop containing nucleotide triphosphate hydrolases"/>
    <property type="match status" value="3"/>
</dbReference>
<dbReference type="Gene3D" id="3.90.1440.10">
    <property type="entry name" value="SecA, preprotein cross-linking domain"/>
    <property type="match status" value="1"/>
</dbReference>
<dbReference type="HAMAP" id="MF_01382">
    <property type="entry name" value="SecA"/>
    <property type="match status" value="1"/>
</dbReference>
<dbReference type="InterPro" id="IPR014001">
    <property type="entry name" value="Helicase_ATP-bd"/>
</dbReference>
<dbReference type="InterPro" id="IPR001650">
    <property type="entry name" value="Helicase_C-like"/>
</dbReference>
<dbReference type="InterPro" id="IPR027417">
    <property type="entry name" value="P-loop_NTPase"/>
</dbReference>
<dbReference type="InterPro" id="IPR000185">
    <property type="entry name" value="SecA"/>
</dbReference>
<dbReference type="InterPro" id="IPR020937">
    <property type="entry name" value="SecA_CS"/>
</dbReference>
<dbReference type="InterPro" id="IPR011115">
    <property type="entry name" value="SecA_DEAD"/>
</dbReference>
<dbReference type="InterPro" id="IPR014018">
    <property type="entry name" value="SecA_motor_DEAD"/>
</dbReference>
<dbReference type="InterPro" id="IPR011130">
    <property type="entry name" value="SecA_preprotein_X-link_dom"/>
</dbReference>
<dbReference type="InterPro" id="IPR044722">
    <property type="entry name" value="SecA_SF2_C"/>
</dbReference>
<dbReference type="InterPro" id="IPR011116">
    <property type="entry name" value="SecA_Wing/Scaffold"/>
</dbReference>
<dbReference type="InterPro" id="IPR036266">
    <property type="entry name" value="SecA_Wing/Scaffold_sf"/>
</dbReference>
<dbReference type="InterPro" id="IPR036670">
    <property type="entry name" value="SecA_X-link_sf"/>
</dbReference>
<dbReference type="NCBIfam" id="NF006630">
    <property type="entry name" value="PRK09200.1"/>
    <property type="match status" value="1"/>
</dbReference>
<dbReference type="NCBIfam" id="NF009538">
    <property type="entry name" value="PRK12904.1"/>
    <property type="match status" value="1"/>
</dbReference>
<dbReference type="NCBIfam" id="TIGR00963">
    <property type="entry name" value="secA"/>
    <property type="match status" value="1"/>
</dbReference>
<dbReference type="PANTHER" id="PTHR30612:SF0">
    <property type="entry name" value="CHLOROPLAST PROTEIN-TRANSPORTING ATPASE"/>
    <property type="match status" value="1"/>
</dbReference>
<dbReference type="PANTHER" id="PTHR30612">
    <property type="entry name" value="SECA INNER MEMBRANE COMPONENT OF SEC PROTEIN SECRETION SYSTEM"/>
    <property type="match status" value="1"/>
</dbReference>
<dbReference type="Pfam" id="PF21090">
    <property type="entry name" value="P-loop_SecA"/>
    <property type="match status" value="2"/>
</dbReference>
<dbReference type="Pfam" id="PF07517">
    <property type="entry name" value="SecA_DEAD"/>
    <property type="match status" value="1"/>
</dbReference>
<dbReference type="Pfam" id="PF01043">
    <property type="entry name" value="SecA_PP_bind"/>
    <property type="match status" value="1"/>
</dbReference>
<dbReference type="Pfam" id="PF07516">
    <property type="entry name" value="SecA_SW"/>
    <property type="match status" value="1"/>
</dbReference>
<dbReference type="PRINTS" id="PR00906">
    <property type="entry name" value="SECA"/>
</dbReference>
<dbReference type="SMART" id="SM00957">
    <property type="entry name" value="SecA_DEAD"/>
    <property type="match status" value="1"/>
</dbReference>
<dbReference type="SMART" id="SM00958">
    <property type="entry name" value="SecA_PP_bind"/>
    <property type="match status" value="1"/>
</dbReference>
<dbReference type="SUPFAM" id="SSF81886">
    <property type="entry name" value="Helical scaffold and wing domains of SecA"/>
    <property type="match status" value="1"/>
</dbReference>
<dbReference type="SUPFAM" id="SSF52540">
    <property type="entry name" value="P-loop containing nucleoside triphosphate hydrolases"/>
    <property type="match status" value="2"/>
</dbReference>
<dbReference type="SUPFAM" id="SSF81767">
    <property type="entry name" value="Pre-protein crosslinking domain of SecA"/>
    <property type="match status" value="1"/>
</dbReference>
<dbReference type="PROSITE" id="PS01312">
    <property type="entry name" value="SECA"/>
    <property type="match status" value="1"/>
</dbReference>
<dbReference type="PROSITE" id="PS51196">
    <property type="entry name" value="SECA_MOTOR_DEAD"/>
    <property type="match status" value="1"/>
</dbReference>
<comment type="function">
    <text evidence="1">Part of the Sec protein translocase complex. Interacts with the SecYEG preprotein conducting channel. Has a central role in coupling the hydrolysis of ATP to the transfer of proteins into and across the cell membrane, serving as an ATP-driven molecular motor driving the stepwise translocation of polypeptide chains across the membrane.</text>
</comment>
<comment type="catalytic activity">
    <reaction evidence="1">
        <text>ATP + H2O + cellular proteinSide 1 = ADP + phosphate + cellular proteinSide 2.</text>
        <dbReference type="EC" id="7.4.2.8"/>
    </reaction>
</comment>
<comment type="subunit">
    <text evidence="1">Monomer and homodimer. Part of the essential Sec protein translocation apparatus which comprises SecA, SecYEG and auxiliary proteins SecDF. Other proteins may also be involved.</text>
</comment>
<comment type="subcellular location">
    <subcellularLocation>
        <location evidence="1">Cell membrane</location>
        <topology evidence="1">Peripheral membrane protein</topology>
        <orientation evidence="1">Cytoplasmic side</orientation>
    </subcellularLocation>
    <subcellularLocation>
        <location evidence="1">Cytoplasm</location>
    </subcellularLocation>
    <text evidence="1">Distribution is 50-50.</text>
</comment>
<comment type="similarity">
    <text evidence="1">Belongs to the SecA family.</text>
</comment>
<organism>
    <name type="scientific">Limosilactobacillus fermentum (strain NBRC 3956 / LMG 18251)</name>
    <name type="common">Lactobacillus fermentum</name>
    <dbReference type="NCBI Taxonomy" id="334390"/>
    <lineage>
        <taxon>Bacteria</taxon>
        <taxon>Bacillati</taxon>
        <taxon>Bacillota</taxon>
        <taxon>Bacilli</taxon>
        <taxon>Lactobacillales</taxon>
        <taxon>Lactobacillaceae</taxon>
        <taxon>Limosilactobacillus</taxon>
    </lineage>
</organism>
<gene>
    <name evidence="1" type="primary">secA</name>
    <name type="ordered locus">LAF_0333</name>
</gene>
<name>SECA_LIMF3</name>
<reference key="1">
    <citation type="journal article" date="2008" name="DNA Res.">
        <title>Comparative genome analysis of Lactobacillus reuteri and Lactobacillus fermentum reveal a genomic island for reuterin and cobalamin production.</title>
        <authorList>
            <person name="Morita H."/>
            <person name="Toh H."/>
            <person name="Fukuda S."/>
            <person name="Horikawa H."/>
            <person name="Oshima K."/>
            <person name="Suzuki T."/>
            <person name="Murakami M."/>
            <person name="Hisamatsu S."/>
            <person name="Kato Y."/>
            <person name="Takizawa T."/>
            <person name="Fukuoka H."/>
            <person name="Yoshimura T."/>
            <person name="Itoh K."/>
            <person name="O'Sullivan D.J."/>
            <person name="McKay L.L."/>
            <person name="Ohno H."/>
            <person name="Kikuchi J."/>
            <person name="Masaoka T."/>
            <person name="Hattori M."/>
        </authorList>
    </citation>
    <scope>NUCLEOTIDE SEQUENCE [LARGE SCALE GENOMIC DNA]</scope>
    <source>
        <strain>NBRC 3956 / LMG 18251</strain>
    </source>
</reference>
<keyword id="KW-0067">ATP-binding</keyword>
<keyword id="KW-1003">Cell membrane</keyword>
<keyword id="KW-0963">Cytoplasm</keyword>
<keyword id="KW-0472">Membrane</keyword>
<keyword id="KW-0547">Nucleotide-binding</keyword>
<keyword id="KW-0653">Protein transport</keyword>
<keyword id="KW-1185">Reference proteome</keyword>
<keyword id="KW-1278">Translocase</keyword>
<keyword id="KW-0811">Translocation</keyword>
<keyword id="KW-0813">Transport</keyword>
<evidence type="ECO:0000255" key="1">
    <source>
        <dbReference type="HAMAP-Rule" id="MF_01382"/>
    </source>
</evidence>
<feature type="chain" id="PRO_1000145028" description="Protein translocase subunit SecA">
    <location>
        <begin position="1"/>
        <end position="789"/>
    </location>
</feature>
<feature type="binding site" evidence="1">
    <location>
        <position position="85"/>
    </location>
    <ligand>
        <name>ATP</name>
        <dbReference type="ChEBI" id="CHEBI:30616"/>
    </ligand>
</feature>
<feature type="binding site" evidence="1">
    <location>
        <begin position="103"/>
        <end position="107"/>
    </location>
    <ligand>
        <name>ATP</name>
        <dbReference type="ChEBI" id="CHEBI:30616"/>
    </ligand>
</feature>
<feature type="binding site" evidence="1">
    <location>
        <position position="492"/>
    </location>
    <ligand>
        <name>ATP</name>
        <dbReference type="ChEBI" id="CHEBI:30616"/>
    </ligand>
</feature>
<protein>
    <recommendedName>
        <fullName evidence="1">Protein translocase subunit SecA</fullName>
        <ecNumber evidence="1">7.4.2.8</ecNumber>
    </recommendedName>
</protein>
<proteinExistence type="inferred from homology"/>